<dbReference type="EMBL" id="FN392273">
    <property type="protein sequence ID" value="CAY61918.1"/>
    <property type="molecule type" value="mRNA"/>
</dbReference>
<dbReference type="EMBL" id="DQ075227">
    <property type="protein sequence ID" value="AAZ29706.1"/>
    <property type="molecule type" value="mRNA"/>
</dbReference>
<dbReference type="SMR" id="Q1I179"/>
<dbReference type="GO" id="GO:0005576">
    <property type="term" value="C:extracellular region"/>
    <property type="evidence" value="ECO:0007669"/>
    <property type="project" value="UniProtKB-SubCell"/>
</dbReference>
<dbReference type="GO" id="GO:0019871">
    <property type="term" value="F:sodium channel inhibitor activity"/>
    <property type="evidence" value="ECO:0007669"/>
    <property type="project" value="InterPro"/>
</dbReference>
<dbReference type="GO" id="GO:0090729">
    <property type="term" value="F:toxin activity"/>
    <property type="evidence" value="ECO:0007669"/>
    <property type="project" value="UniProtKB-KW"/>
</dbReference>
<dbReference type="GO" id="GO:0006952">
    <property type="term" value="P:defense response"/>
    <property type="evidence" value="ECO:0007669"/>
    <property type="project" value="InterPro"/>
</dbReference>
<dbReference type="CDD" id="cd23106">
    <property type="entry name" value="neurotoxins_LC_scorpion"/>
    <property type="match status" value="1"/>
</dbReference>
<dbReference type="FunFam" id="3.30.30.10:FF:000002">
    <property type="entry name" value="Alpha-like toxin BmK-M1"/>
    <property type="match status" value="1"/>
</dbReference>
<dbReference type="Gene3D" id="3.30.30.10">
    <property type="entry name" value="Knottin, scorpion toxin-like"/>
    <property type="match status" value="1"/>
</dbReference>
<dbReference type="InterPro" id="IPR044062">
    <property type="entry name" value="LCN-type_CS_alpha_beta_dom"/>
</dbReference>
<dbReference type="InterPro" id="IPR003614">
    <property type="entry name" value="Scorpion_toxin-like"/>
</dbReference>
<dbReference type="InterPro" id="IPR036574">
    <property type="entry name" value="Scorpion_toxin-like_sf"/>
</dbReference>
<dbReference type="InterPro" id="IPR018218">
    <property type="entry name" value="Scorpion_toxinL"/>
</dbReference>
<dbReference type="InterPro" id="IPR002061">
    <property type="entry name" value="Scorpion_toxinL/defensin"/>
</dbReference>
<dbReference type="Pfam" id="PF00537">
    <property type="entry name" value="Toxin_3"/>
    <property type="match status" value="1"/>
</dbReference>
<dbReference type="PRINTS" id="PR00285">
    <property type="entry name" value="SCORPNTOXIN"/>
</dbReference>
<dbReference type="SMART" id="SM00505">
    <property type="entry name" value="Knot1"/>
    <property type="match status" value="1"/>
</dbReference>
<dbReference type="SUPFAM" id="SSF57095">
    <property type="entry name" value="Scorpion toxin-like"/>
    <property type="match status" value="1"/>
</dbReference>
<dbReference type="PROSITE" id="PS51863">
    <property type="entry name" value="LCN_CSAB"/>
    <property type="match status" value="1"/>
</dbReference>
<protein>
    <recommendedName>
        <fullName>Toxin Td2</fullName>
    </recommendedName>
    <alternativeName>
        <fullName>P*T-beta* NaTx13.2</fullName>
    </alternativeName>
</protein>
<name>SCX2_TITDI</name>
<evidence type="ECO:0000250" key="1"/>
<evidence type="ECO:0000255" key="2">
    <source>
        <dbReference type="PROSITE-ProRule" id="PRU01210"/>
    </source>
</evidence>
<evidence type="ECO:0000269" key="3">
    <source>
    </source>
</evidence>
<evidence type="ECO:0000305" key="4"/>
<organism>
    <name type="scientific">Tityus discrepans</name>
    <name type="common">Venezuelan scorpion</name>
    <dbReference type="NCBI Taxonomy" id="57059"/>
    <lineage>
        <taxon>Eukaryota</taxon>
        <taxon>Metazoa</taxon>
        <taxon>Ecdysozoa</taxon>
        <taxon>Arthropoda</taxon>
        <taxon>Chelicerata</taxon>
        <taxon>Arachnida</taxon>
        <taxon>Scorpiones</taxon>
        <taxon>Buthida</taxon>
        <taxon>Buthoidea</taxon>
        <taxon>Buthidae</taxon>
        <taxon>Tityus</taxon>
    </lineage>
</organism>
<comment type="function">
    <text evidence="1">Beta toxins bind voltage-independently at site-4 of sodium channels (Nav) and shift the voltage of activation toward more negative potentials thereby affecting sodium channel activation and promoting spontaneous and repetitive firing.</text>
</comment>
<comment type="subcellular location">
    <subcellularLocation>
        <location>Secreted</location>
    </subcellularLocation>
</comment>
<comment type="tissue specificity">
    <text>Expressed by the venom gland.</text>
</comment>
<comment type="domain">
    <text evidence="4">Has the structural arrangement of an alpha-helix connected to antiparallel beta-sheets by disulfide bonds (CS-alpha/beta).</text>
</comment>
<comment type="mass spectrometry"/>
<comment type="similarity">
    <text evidence="4">Belongs to the long (4 C-C) scorpion toxin superfamily. Sodium channel inhibitor family. Beta subfamily.</text>
</comment>
<keyword id="KW-0027">Amidation</keyword>
<keyword id="KW-1015">Disulfide bond</keyword>
<keyword id="KW-0872">Ion channel impairing toxin</keyword>
<keyword id="KW-0528">Neurotoxin</keyword>
<keyword id="KW-0964">Secreted</keyword>
<keyword id="KW-0732">Signal</keyword>
<keyword id="KW-0800">Toxin</keyword>
<keyword id="KW-0738">Voltage-gated sodium channel impairing toxin</keyword>
<reference key="1">
    <citation type="journal article" date="2009" name="Biochimie">
        <title>Molecular cloning and nucleotide sequence analysis of genes from a cDNA library of the scorpion Tityus discrepans.</title>
        <authorList>
            <person name="D'Suze G."/>
            <person name="Schwartz E.F."/>
            <person name="Garcia-Gomez B.I."/>
            <person name="Sevcik C."/>
            <person name="Possani L.D."/>
        </authorList>
    </citation>
    <scope>NUCLEOTIDE SEQUENCE [MRNA]</scope>
    <source>
        <tissue>Venom gland</tissue>
    </source>
</reference>
<reference key="2">
    <citation type="journal article" date="2006" name="Comp. Biochem. Physiol.">
        <title>Diversity of long-chain toxins in Tityus zulianus and Tityus discrepans venoms (Scorpiones, Buthidae): molecular, immunological, and mass spectral analyses.</title>
        <authorList>
            <person name="Borges A."/>
            <person name="Garcia C.C."/>
            <person name="Lugo E."/>
            <person name="Alfonzo M.J."/>
            <person name="Jowers M.J."/>
            <person name="Op den Camp H.J.M."/>
        </authorList>
    </citation>
    <scope>NUCLEOTIDE SEQUENCE [MRNA] OF 14-86</scope>
    <scope>MASS SPECTROMETRY</scope>
    <source>
        <tissue>Venom</tissue>
        <tissue>Venom gland</tissue>
    </source>
</reference>
<reference key="3">
    <citation type="journal article" date="2012" name="PLoS ONE">
        <title>Identification and phylogenetic analysis of Tityus pachyurus and Tityus obscurus novel putative Na+-channel scorpion toxins.</title>
        <authorList>
            <person name="Guerrero-Vargas J.A."/>
            <person name="Mourao C.B."/>
            <person name="Quintero-Hernandez V."/>
            <person name="Possani L.D."/>
            <person name="Schwartz E.F."/>
        </authorList>
    </citation>
    <scope>NOMENCLATURE</scope>
</reference>
<feature type="signal peptide">
    <location>
        <begin position="1"/>
        <end position="20"/>
    </location>
</feature>
<feature type="chain" id="PRO_0000253765" description="Toxin Td2">
    <location>
        <begin position="21"/>
        <end position="84"/>
    </location>
</feature>
<feature type="domain" description="LCN-type CS-alpha/beta" evidence="2">
    <location>
        <begin position="21"/>
        <end position="83"/>
    </location>
</feature>
<feature type="modified residue" description="Arginine amide" evidence="1">
    <location>
        <position position="84"/>
    </location>
</feature>
<feature type="disulfide bond" evidence="2">
    <location>
        <begin position="31"/>
        <end position="82"/>
    </location>
</feature>
<feature type="disulfide bond" evidence="2">
    <location>
        <begin position="35"/>
        <end position="57"/>
    </location>
</feature>
<feature type="disulfide bond" evidence="2">
    <location>
        <begin position="43"/>
        <end position="63"/>
    </location>
</feature>
<feature type="disulfide bond" evidence="2">
    <location>
        <begin position="47"/>
        <end position="65"/>
    </location>
</feature>
<accession>Q1I179</accession>
<accession>C9X4J5</accession>
<sequence>MTRFVLFLNCFFLICMVVECKEGYLMGADGCKRSCLTRPGHYCANECSRVKGTDGYCYAWLACYCYNMPNWVKTWDRATNTCGRGK</sequence>
<proteinExistence type="evidence at protein level"/>